<feature type="chain" id="PRO_0000130458" description="Large ribosomal subunit protein uL29">
    <location>
        <begin position="1"/>
        <end position="69"/>
    </location>
</feature>
<dbReference type="EMBL" id="BX571856">
    <property type="protein sequence ID" value="CAG41308.1"/>
    <property type="molecule type" value="Genomic_DNA"/>
</dbReference>
<dbReference type="RefSeq" id="WP_000644737.1">
    <property type="nucleotide sequence ID" value="NC_002952.2"/>
</dbReference>
<dbReference type="SMR" id="Q6GEJ1"/>
<dbReference type="GeneID" id="98346554"/>
<dbReference type="KEGG" id="sar:SAR2327"/>
<dbReference type="HOGENOM" id="CLU_158491_5_2_9"/>
<dbReference type="Proteomes" id="UP000000596">
    <property type="component" value="Chromosome"/>
</dbReference>
<dbReference type="GO" id="GO:0022625">
    <property type="term" value="C:cytosolic large ribosomal subunit"/>
    <property type="evidence" value="ECO:0007669"/>
    <property type="project" value="TreeGrafter"/>
</dbReference>
<dbReference type="GO" id="GO:0003735">
    <property type="term" value="F:structural constituent of ribosome"/>
    <property type="evidence" value="ECO:0007669"/>
    <property type="project" value="InterPro"/>
</dbReference>
<dbReference type="GO" id="GO:0006412">
    <property type="term" value="P:translation"/>
    <property type="evidence" value="ECO:0007669"/>
    <property type="project" value="UniProtKB-UniRule"/>
</dbReference>
<dbReference type="CDD" id="cd00427">
    <property type="entry name" value="Ribosomal_L29_HIP"/>
    <property type="match status" value="1"/>
</dbReference>
<dbReference type="FunFam" id="1.10.287.310:FF:000001">
    <property type="entry name" value="50S ribosomal protein L29"/>
    <property type="match status" value="1"/>
</dbReference>
<dbReference type="Gene3D" id="1.10.287.310">
    <property type="match status" value="1"/>
</dbReference>
<dbReference type="HAMAP" id="MF_00374">
    <property type="entry name" value="Ribosomal_uL29"/>
    <property type="match status" value="1"/>
</dbReference>
<dbReference type="InterPro" id="IPR050063">
    <property type="entry name" value="Ribosomal_protein_uL29"/>
</dbReference>
<dbReference type="InterPro" id="IPR001854">
    <property type="entry name" value="Ribosomal_uL29"/>
</dbReference>
<dbReference type="InterPro" id="IPR036049">
    <property type="entry name" value="Ribosomal_uL29_sf"/>
</dbReference>
<dbReference type="NCBIfam" id="TIGR00012">
    <property type="entry name" value="L29"/>
    <property type="match status" value="1"/>
</dbReference>
<dbReference type="PANTHER" id="PTHR10916">
    <property type="entry name" value="60S RIBOSOMAL PROTEIN L35/50S RIBOSOMAL PROTEIN L29"/>
    <property type="match status" value="1"/>
</dbReference>
<dbReference type="PANTHER" id="PTHR10916:SF0">
    <property type="entry name" value="LARGE RIBOSOMAL SUBUNIT PROTEIN UL29C"/>
    <property type="match status" value="1"/>
</dbReference>
<dbReference type="Pfam" id="PF00831">
    <property type="entry name" value="Ribosomal_L29"/>
    <property type="match status" value="1"/>
</dbReference>
<dbReference type="SUPFAM" id="SSF46561">
    <property type="entry name" value="Ribosomal protein L29 (L29p)"/>
    <property type="match status" value="1"/>
</dbReference>
<gene>
    <name evidence="1" type="primary">rpmC</name>
    <name type="ordered locus">SAR2327</name>
</gene>
<keyword id="KW-0687">Ribonucleoprotein</keyword>
<keyword id="KW-0689">Ribosomal protein</keyword>
<protein>
    <recommendedName>
        <fullName evidence="1">Large ribosomal subunit protein uL29</fullName>
    </recommendedName>
    <alternativeName>
        <fullName evidence="2">50S ribosomal protein L29</fullName>
    </alternativeName>
</protein>
<name>RL29_STAAR</name>
<accession>Q6GEJ1</accession>
<proteinExistence type="inferred from homology"/>
<reference key="1">
    <citation type="journal article" date="2004" name="Proc. Natl. Acad. Sci. U.S.A.">
        <title>Complete genomes of two clinical Staphylococcus aureus strains: evidence for the rapid evolution of virulence and drug resistance.</title>
        <authorList>
            <person name="Holden M.T.G."/>
            <person name="Feil E.J."/>
            <person name="Lindsay J.A."/>
            <person name="Peacock S.J."/>
            <person name="Day N.P.J."/>
            <person name="Enright M.C."/>
            <person name="Foster T.J."/>
            <person name="Moore C.E."/>
            <person name="Hurst L."/>
            <person name="Atkin R."/>
            <person name="Barron A."/>
            <person name="Bason N."/>
            <person name="Bentley S.D."/>
            <person name="Chillingworth C."/>
            <person name="Chillingworth T."/>
            <person name="Churcher C."/>
            <person name="Clark L."/>
            <person name="Corton C."/>
            <person name="Cronin A."/>
            <person name="Doggett J."/>
            <person name="Dowd L."/>
            <person name="Feltwell T."/>
            <person name="Hance Z."/>
            <person name="Harris B."/>
            <person name="Hauser H."/>
            <person name="Holroyd S."/>
            <person name="Jagels K."/>
            <person name="James K.D."/>
            <person name="Lennard N."/>
            <person name="Line A."/>
            <person name="Mayes R."/>
            <person name="Moule S."/>
            <person name="Mungall K."/>
            <person name="Ormond D."/>
            <person name="Quail M.A."/>
            <person name="Rabbinowitsch E."/>
            <person name="Rutherford K.M."/>
            <person name="Sanders M."/>
            <person name="Sharp S."/>
            <person name="Simmonds M."/>
            <person name="Stevens K."/>
            <person name="Whitehead S."/>
            <person name="Barrell B.G."/>
            <person name="Spratt B.G."/>
            <person name="Parkhill J."/>
        </authorList>
    </citation>
    <scope>NUCLEOTIDE SEQUENCE [LARGE SCALE GENOMIC DNA]</scope>
    <source>
        <strain>MRSA252</strain>
    </source>
</reference>
<sequence length="69" mass="8090">MKAKEIRDLTTSEIEEQIKSSKEELFNLRFQLATGQLEETARIRTVRKTIARLKTVAREREIEQSKANQ</sequence>
<organism>
    <name type="scientific">Staphylococcus aureus (strain MRSA252)</name>
    <dbReference type="NCBI Taxonomy" id="282458"/>
    <lineage>
        <taxon>Bacteria</taxon>
        <taxon>Bacillati</taxon>
        <taxon>Bacillota</taxon>
        <taxon>Bacilli</taxon>
        <taxon>Bacillales</taxon>
        <taxon>Staphylococcaceae</taxon>
        <taxon>Staphylococcus</taxon>
    </lineage>
</organism>
<evidence type="ECO:0000255" key="1">
    <source>
        <dbReference type="HAMAP-Rule" id="MF_00374"/>
    </source>
</evidence>
<evidence type="ECO:0000305" key="2"/>
<comment type="similarity">
    <text evidence="1">Belongs to the universal ribosomal protein uL29 family.</text>
</comment>